<keyword id="KW-0378">Hydrolase</keyword>
<keyword id="KW-0460">Magnesium</keyword>
<keyword id="KW-0479">Metal-binding</keyword>
<keyword id="KW-1185">Reference proteome</keyword>
<name>MCTE_CERS4</name>
<reference evidence="3 5" key="1">
    <citation type="journal article" date="2010" name="J. Bacteriol.">
        <title>The apparent malate synthase activity of Rhodobacter sphaeroides is due to two paralogous enzymes, (3S)-Malyl-coenzyme A (CoA)/{beta}-methylmalyl-CoA lyase and (3S)- Malyl-CoA thioesterase.</title>
        <authorList>
            <person name="Erb T.J."/>
            <person name="Frerichs-Revermann L."/>
            <person name="Fuchs G."/>
            <person name="Alber B.E."/>
        </authorList>
    </citation>
    <scope>NUCLEOTIDE SEQUENCE [GENOMIC DNA]</scope>
    <scope>FUNCTION</scope>
    <scope>CATALYTIC ACTIVITY</scope>
    <scope>COFACTOR</scope>
    <scope>ACTIVITY REGULATION</scope>
    <scope>BIOPHYSICOCHEMICAL PROPERTIES</scope>
    <scope>SUBUNIT</scope>
    <scope>INDUCTION</scope>
</reference>
<reference evidence="4" key="2">
    <citation type="submission" date="2005-09" db="EMBL/GenBank/DDBJ databases">
        <title>Complete sequence of chromosome 1 of Rhodobacter sphaeroides 2.4.1.</title>
        <authorList>
            <person name="Copeland A."/>
            <person name="Lucas S."/>
            <person name="Lapidus A."/>
            <person name="Barry K."/>
            <person name="Detter J.C."/>
            <person name="Glavina T."/>
            <person name="Hammon N."/>
            <person name="Israni S."/>
            <person name="Pitluck S."/>
            <person name="Richardson P."/>
            <person name="Mackenzie C."/>
            <person name="Choudhary M."/>
            <person name="Larimer F."/>
            <person name="Hauser L.J."/>
            <person name="Land M."/>
            <person name="Donohue T.J."/>
            <person name="Kaplan S."/>
        </authorList>
    </citation>
    <scope>NUCLEOTIDE SEQUENCE [LARGE SCALE GENOMIC DNA]</scope>
    <source>
        <strain>ATCC 17023 / DSM 158 / JCM 6121 / CCUG 31486 / LMG 2827 / NBRC 12203 / NCIMB 8253 / ATH 2.4.1.</strain>
    </source>
</reference>
<proteinExistence type="evidence at protein level"/>
<feature type="chain" id="PRO_0000405020" description="(3S)-malyl-CoA thioesterase">
    <location>
        <begin position="1"/>
        <end position="285"/>
    </location>
</feature>
<feature type="binding site" evidence="1">
    <location>
        <position position="70"/>
    </location>
    <ligand>
        <name>substrate</name>
    </ligand>
</feature>
<feature type="binding site" evidence="1">
    <location>
        <position position="122"/>
    </location>
    <ligand>
        <name>Mg(2+)</name>
        <dbReference type="ChEBI" id="CHEBI:18420"/>
    </ligand>
</feature>
<feature type="binding site" evidence="1">
    <location>
        <position position="122"/>
    </location>
    <ligand>
        <name>substrate</name>
    </ligand>
</feature>
<feature type="binding site" evidence="1">
    <location>
        <position position="148"/>
    </location>
    <ligand>
        <name>Mg(2+)</name>
        <dbReference type="ChEBI" id="CHEBI:18420"/>
    </ligand>
</feature>
<comment type="function">
    <text evidence="2">Catalyzes the hydrolysis of (3S)-malyl-CoA to (3S)-malate and free CoA. Inactive towards beta-methylmalyl-CoA and other CoA esters.</text>
</comment>
<comment type="catalytic activity">
    <reaction evidence="2">
        <text>(S)-malyl-CoA + H2O = (S)-malate + CoA + H(+)</text>
        <dbReference type="Rhea" id="RHEA:38291"/>
        <dbReference type="ChEBI" id="CHEBI:15377"/>
        <dbReference type="ChEBI" id="CHEBI:15378"/>
        <dbReference type="ChEBI" id="CHEBI:15589"/>
        <dbReference type="ChEBI" id="CHEBI:57287"/>
        <dbReference type="ChEBI" id="CHEBI:57317"/>
        <dbReference type="EC" id="3.1.2.30"/>
    </reaction>
</comment>
<comment type="cofactor">
    <cofactor evidence="2">
        <name>Mg(2+)</name>
        <dbReference type="ChEBI" id="CHEBI:18420"/>
    </cofactor>
</comment>
<comment type="activity regulation">
    <text evidence="2">Reversibly inhibited by EDTA. Stimulated by the divalent cations Mg(2+) and Mn(2+).</text>
</comment>
<comment type="biophysicochemical properties">
    <kinetics>
        <KM evidence="2">0.09 mM for (3S)-malyl-CoA (in the presence of Mg(2+) or Mn(2+))</KM>
    </kinetics>
</comment>
<comment type="subunit">
    <text evidence="2">Homodimer or homotrimer.</text>
</comment>
<comment type="induction">
    <text evidence="2">Induced by growth on acetate.</text>
</comment>
<comment type="similarity">
    <text evidence="3">Belongs to the HpcH/HpaI aldolase family.</text>
</comment>
<dbReference type="EC" id="3.1.2.30"/>
<dbReference type="EMBL" id="GU320613">
    <property type="protein sequence ID" value="ADC44454.1"/>
    <property type="molecule type" value="Genomic_DNA"/>
</dbReference>
<dbReference type="EMBL" id="CP000143">
    <property type="protein sequence ID" value="ABA80153.1"/>
    <property type="molecule type" value="Genomic_DNA"/>
</dbReference>
<dbReference type="RefSeq" id="WP_011338634.1">
    <property type="nucleotide sequence ID" value="NC_007493.2"/>
</dbReference>
<dbReference type="RefSeq" id="YP_354054.1">
    <property type="nucleotide sequence ID" value="NC_007493.2"/>
</dbReference>
<dbReference type="SMR" id="D3JV05"/>
<dbReference type="STRING" id="272943.RSP_0970"/>
<dbReference type="EnsemblBacteria" id="ABA80153">
    <property type="protein sequence ID" value="ABA80153"/>
    <property type="gene ID" value="RSP_0970"/>
</dbReference>
<dbReference type="GeneID" id="3720761"/>
<dbReference type="KEGG" id="rsp:RSP_0970"/>
<dbReference type="PATRIC" id="fig|272943.9.peg.2942"/>
<dbReference type="eggNOG" id="COG2301">
    <property type="taxonomic scope" value="Bacteria"/>
</dbReference>
<dbReference type="OrthoDB" id="9800547at2"/>
<dbReference type="PhylomeDB" id="D3JV05"/>
<dbReference type="BRENDA" id="3.1.2.30">
    <property type="organism ID" value="5383"/>
</dbReference>
<dbReference type="SABIO-RK" id="D3JV05"/>
<dbReference type="Proteomes" id="UP000002703">
    <property type="component" value="Chromosome 1"/>
</dbReference>
<dbReference type="GO" id="GO:0016787">
    <property type="term" value="F:hydrolase activity"/>
    <property type="evidence" value="ECO:0007669"/>
    <property type="project" value="UniProtKB-KW"/>
</dbReference>
<dbReference type="GO" id="GO:0000287">
    <property type="term" value="F:magnesium ion binding"/>
    <property type="evidence" value="ECO:0007669"/>
    <property type="project" value="TreeGrafter"/>
</dbReference>
<dbReference type="GO" id="GO:0006107">
    <property type="term" value="P:oxaloacetate metabolic process"/>
    <property type="evidence" value="ECO:0007669"/>
    <property type="project" value="TreeGrafter"/>
</dbReference>
<dbReference type="Gene3D" id="3.20.20.60">
    <property type="entry name" value="Phosphoenolpyruvate-binding domains"/>
    <property type="match status" value="1"/>
</dbReference>
<dbReference type="InterPro" id="IPR005000">
    <property type="entry name" value="Aldolase/citrate-lyase_domain"/>
</dbReference>
<dbReference type="InterPro" id="IPR011206">
    <property type="entry name" value="Citrate_lyase_beta/mcl1/mcl2"/>
</dbReference>
<dbReference type="InterPro" id="IPR015813">
    <property type="entry name" value="Pyrv/PenolPyrv_kinase-like_dom"/>
</dbReference>
<dbReference type="InterPro" id="IPR040442">
    <property type="entry name" value="Pyrv_kinase-like_dom_sf"/>
</dbReference>
<dbReference type="PANTHER" id="PTHR32308:SF10">
    <property type="entry name" value="CITRATE LYASE SUBUNIT BETA"/>
    <property type="match status" value="1"/>
</dbReference>
<dbReference type="PANTHER" id="PTHR32308">
    <property type="entry name" value="LYASE BETA SUBUNIT, PUTATIVE (AFU_ORTHOLOGUE AFUA_4G13030)-RELATED"/>
    <property type="match status" value="1"/>
</dbReference>
<dbReference type="Pfam" id="PF03328">
    <property type="entry name" value="HpcH_HpaI"/>
    <property type="match status" value="1"/>
</dbReference>
<dbReference type="PIRSF" id="PIRSF015582">
    <property type="entry name" value="Cit_lyase_B"/>
    <property type="match status" value="1"/>
</dbReference>
<dbReference type="SUPFAM" id="SSF51621">
    <property type="entry name" value="Phosphoenolpyruvate/pyruvate domain"/>
    <property type="match status" value="1"/>
</dbReference>
<protein>
    <recommendedName>
        <fullName evidence="5">(3S)-malyl-CoA thioesterase</fullName>
        <ecNumber>3.1.2.30</ecNumber>
    </recommendedName>
    <alternativeName>
        <fullName>(3S)-malyl-CoA thiolesterase</fullName>
    </alternativeName>
</protein>
<gene>
    <name evidence="5" type="primary">mcl2</name>
    <name type="ordered locus">RHOS4_25850</name>
    <name type="ORF">RSP_0970</name>
</gene>
<organism>
    <name type="scientific">Cereibacter sphaeroides (strain ATCC 17023 / DSM 158 / JCM 6121 / CCUG 31486 / LMG 2827 / NBRC 12203 / NCIMB 8253 / ATH 2.4.1.)</name>
    <name type="common">Rhodobacter sphaeroides</name>
    <dbReference type="NCBI Taxonomy" id="272943"/>
    <lineage>
        <taxon>Bacteria</taxon>
        <taxon>Pseudomonadati</taxon>
        <taxon>Pseudomonadota</taxon>
        <taxon>Alphaproteobacteria</taxon>
        <taxon>Rhodobacterales</taxon>
        <taxon>Paracoccaceae</taxon>
        <taxon>Cereibacter</taxon>
    </lineage>
</organism>
<accession>D3JV05</accession>
<accession>Q3IZ81</accession>
<evidence type="ECO:0000250" key="1">
    <source>
        <dbReference type="UniProtKB" id="Q9RUZ0"/>
    </source>
</evidence>
<evidence type="ECO:0000269" key="2">
    <source>
    </source>
</evidence>
<evidence type="ECO:0000305" key="3"/>
<evidence type="ECO:0000312" key="4">
    <source>
        <dbReference type="EMBL" id="ABA80153.1"/>
    </source>
</evidence>
<evidence type="ECO:0000312" key="5">
    <source>
        <dbReference type="EMBL" id="ADC44454.1"/>
    </source>
</evidence>
<sequence length="285" mass="30861">MAHQAHPFRSVLYIPGSKERALEKAQGLAADAIIFDLEDAVAHDEKIHARRLLKTTLETADYGHRFRIVRVNGMDTEWGRADLEAFAEAKADAILIPKVSRAADLEAVAALVPDLPLWAMMETAQGMLNAAEIAAHPRLSGMVMGTNDLAKELGSRYRPDRLAMQAGLGLCLLAARAHGLTIVDGVYNAFKDEEGLRAECEQGRDMGFDGKTLIHPAQLEIANAVFSPSPAEIELANRQIAAFEEAERHGQGVAVVDGKIVENLHIVTARQTLAKAEAIAAFRAS</sequence>